<feature type="chain" id="PRO_0000245173" description="FACT complex subunit spt-16">
    <location>
        <begin position="1"/>
        <end position="1030"/>
    </location>
</feature>
<feature type="region of interest" description="Disordered" evidence="3">
    <location>
        <begin position="435"/>
        <end position="477"/>
    </location>
</feature>
<feature type="region of interest" description="Disordered" evidence="3">
    <location>
        <begin position="491"/>
        <end position="514"/>
    </location>
</feature>
<feature type="region of interest" description="Disordered" evidence="3">
    <location>
        <begin position="927"/>
        <end position="1030"/>
    </location>
</feature>
<feature type="coiled-coil region" evidence="2">
    <location>
        <begin position="424"/>
        <end position="445"/>
    </location>
</feature>
<feature type="coiled-coil region" evidence="2">
    <location>
        <begin position="623"/>
        <end position="645"/>
    </location>
</feature>
<feature type="coiled-coil region" evidence="2">
    <location>
        <begin position="987"/>
        <end position="1007"/>
    </location>
</feature>
<feature type="compositionally biased region" description="Basic and acidic residues" evidence="3">
    <location>
        <begin position="435"/>
        <end position="449"/>
    </location>
</feature>
<feature type="compositionally biased region" description="Basic and acidic residues" evidence="3">
    <location>
        <begin position="464"/>
        <end position="477"/>
    </location>
</feature>
<feature type="compositionally biased region" description="Acidic residues" evidence="3">
    <location>
        <begin position="929"/>
        <end position="951"/>
    </location>
</feature>
<feature type="compositionally biased region" description="Acidic residues" evidence="3">
    <location>
        <begin position="958"/>
        <end position="983"/>
    </location>
</feature>
<feature type="compositionally biased region" description="Basic and acidic residues" evidence="3">
    <location>
        <begin position="998"/>
        <end position="1014"/>
    </location>
</feature>
<feature type="compositionally biased region" description="Basic residues" evidence="3">
    <location>
        <begin position="1015"/>
        <end position="1030"/>
    </location>
</feature>
<gene>
    <name evidence="6 9" type="primary">spt-16</name>
    <name evidence="9" type="ORF">F55A3.3</name>
</gene>
<reference key="1">
    <citation type="journal article" date="1998" name="Science">
        <title>Genome sequence of the nematode C. elegans: a platform for investigating biology.</title>
        <authorList>
            <consortium name="The C. elegans sequencing consortium"/>
        </authorList>
    </citation>
    <scope>NUCLEOTIDE SEQUENCE [LARGE SCALE GENOMIC DNA]</scope>
    <source>
        <strain>Bristol N2</strain>
    </source>
</reference>
<reference key="2">
    <citation type="journal article" date="2015" name="Dev. Biol.">
        <title>Comprehensive single cell-resolution analysis of the role of chromatin regulators in early C. elegans embryogenesis.</title>
        <authorList>
            <person name="Krueger A.V."/>
            <person name="Jelier R."/>
            <person name="Dzyubachyk O."/>
            <person name="Zimmerman T."/>
            <person name="Meijering E."/>
            <person name="Lehner B."/>
        </authorList>
    </citation>
    <scope>FUNCTION</scope>
    <scope>DISRUPTION PHENOTYPE</scope>
</reference>
<reference key="3">
    <citation type="journal article" date="2018" name="Dev. Biol.">
        <title>FACT complex gene duplicates exhibit redundant and non-redundant functions in C. elegans.</title>
        <authorList>
            <person name="Suggs B.Z."/>
            <person name="Latham A.L."/>
            <person name="Dawes A.T."/>
            <person name="Chamberlin H.M."/>
        </authorList>
    </citation>
    <scope>FUNCTION</scope>
    <scope>IDENTIFICATION IN FACT COMPLEX</scope>
    <scope>SUBCELLULAR LOCATION</scope>
    <scope>TISSUE SPECIFICITY</scope>
    <scope>DEVELOPMENTAL STAGE</scope>
    <scope>DISRUPTION PHENOTYPE</scope>
</reference>
<comment type="function">
    <text evidence="1 4 5">Component of the FACT complex, a general chromatin factor that acts to reorganize nucleosomes. The FACT complex is involved in multiple processes that require DNA as a template such as mRNA elongation, DNA replication and DNA repair. During transcription elongation the FACT complex acts as a histone chaperone that both destabilizes and restores nucleosomal structure. It facilitates the passage of RNA polymerase II and transcription by promoting the dissociation of one histone H2A-H2B dimer from the nucleosome, then subsequently promotes the reestablishment of the nucleosome following the passage of RNA polymerase II (By similarity). In embryos, promotes cell cycle progression and chromosomal segregation (PubMed:25446273, PubMed:30336114). Plays a role in the development of the anterior pharynx during embryonic development (PubMed:30336114).</text>
</comment>
<comment type="subunit">
    <text evidence="8">Component of the FACT complex, a stable heterodimer of spt-16 and hmg-3 or hmg-4.</text>
</comment>
<comment type="subcellular location">
    <subcellularLocation>
        <location evidence="5">Nucleus</location>
    </subcellularLocation>
    <subcellularLocation>
        <location evidence="1">Chromosome</location>
    </subcellularLocation>
</comment>
<comment type="tissue specificity">
    <text evidence="5">Expressed in the germline and somatic cells.</text>
</comment>
<comment type="developmental stage">
    <text evidence="5">Expressed throughout development (PubMed:30336114). First expressed in embryos at the 1-cell stage (PubMed:30336114).</text>
</comment>
<comment type="disruption phenotype">
    <text evidence="4 5">RNAi-mediated knockdown in embryos results in failed hatching in 83% of animals (PubMed:30336114). In addition, these embryos lack the anterior pharynx (PubMed:30336114). RNAi-mediated knockdown at the L4 larval stage results in failed development of the anterior pharynx (PubMed:30336114). RNAi-mediated knockdown at this stage results in defective cell cycle initiation, duration and completion in embryos, and abnormalities in chromosome segregation (PubMed:25446273, PubMed:30336114).</text>
</comment>
<comment type="similarity">
    <text evidence="7">Belongs to the peptidase M24 family. SPT16 subfamily.</text>
</comment>
<comment type="caution">
    <text evidence="7">Although related to the peptidase M24 family, this protein lacks conserved active site residues suggesting that it may lack peptidase activity.</text>
</comment>
<dbReference type="EMBL" id="BX284601">
    <property type="protein sequence ID" value="CCD66831.1"/>
    <property type="molecule type" value="Genomic_DNA"/>
</dbReference>
<dbReference type="RefSeq" id="NP_492821.1">
    <property type="nucleotide sequence ID" value="NM_060420.5"/>
</dbReference>
<dbReference type="SMR" id="Q9N5R9"/>
<dbReference type="BioGRID" id="38394">
    <property type="interactions" value="32"/>
</dbReference>
<dbReference type="ComplexPortal" id="CPX-3890">
    <property type="entry name" value="FACT complex hmg-3 variant"/>
</dbReference>
<dbReference type="ComplexPortal" id="CPX-3891">
    <property type="entry name" value="FACT complex hmg-4 variant"/>
</dbReference>
<dbReference type="FunCoup" id="Q9N5R9">
    <property type="interactions" value="3553"/>
</dbReference>
<dbReference type="STRING" id="6239.F55A3.3.1"/>
<dbReference type="iPTMnet" id="Q9N5R9"/>
<dbReference type="PaxDb" id="6239-F55A3.3"/>
<dbReference type="PeptideAtlas" id="Q9N5R9"/>
<dbReference type="EnsemblMetazoa" id="F55A3.3.1">
    <property type="protein sequence ID" value="F55A3.3.1"/>
    <property type="gene ID" value="WBGene00018849"/>
</dbReference>
<dbReference type="GeneID" id="172984"/>
<dbReference type="KEGG" id="cel:CELE_F55A3.3"/>
<dbReference type="UCSC" id="F55A3.3">
    <property type="organism name" value="c. elegans"/>
</dbReference>
<dbReference type="AGR" id="WB:WBGene00018849"/>
<dbReference type="CTD" id="172984"/>
<dbReference type="WormBase" id="F55A3.3">
    <property type="protein sequence ID" value="CE17113"/>
    <property type="gene ID" value="WBGene00018849"/>
    <property type="gene designation" value="spt-16"/>
</dbReference>
<dbReference type="eggNOG" id="KOG1189">
    <property type="taxonomic scope" value="Eukaryota"/>
</dbReference>
<dbReference type="GeneTree" id="ENSGT00390000014495"/>
<dbReference type="HOGENOM" id="CLU_004627_1_0_1"/>
<dbReference type="InParanoid" id="Q9N5R9"/>
<dbReference type="OMA" id="YHINTIP"/>
<dbReference type="OrthoDB" id="10251642at2759"/>
<dbReference type="PhylomeDB" id="Q9N5R9"/>
<dbReference type="Reactome" id="R-CEL-112382">
    <property type="pathway name" value="Formation of RNA Pol II elongation complex"/>
</dbReference>
<dbReference type="Reactome" id="R-CEL-674695">
    <property type="pathway name" value="RNA Polymerase II Pre-transcription Events"/>
</dbReference>
<dbReference type="Reactome" id="R-CEL-6796648">
    <property type="pathway name" value="TP53 Regulates Transcription of DNA Repair Genes"/>
</dbReference>
<dbReference type="Reactome" id="R-CEL-6804756">
    <property type="pathway name" value="Regulation of TP53 Activity through Phosphorylation"/>
</dbReference>
<dbReference type="Reactome" id="R-CEL-75955">
    <property type="pathway name" value="RNA Polymerase II Transcription Elongation"/>
</dbReference>
<dbReference type="PRO" id="PR:Q9N5R9"/>
<dbReference type="Proteomes" id="UP000001940">
    <property type="component" value="Chromosome I"/>
</dbReference>
<dbReference type="Bgee" id="WBGene00018849">
    <property type="expression patterns" value="Expressed in embryo and 4 other cell types or tissues"/>
</dbReference>
<dbReference type="GO" id="GO:0035101">
    <property type="term" value="C:FACT complex"/>
    <property type="evidence" value="ECO:0000318"/>
    <property type="project" value="GO_Central"/>
</dbReference>
<dbReference type="GO" id="GO:0005634">
    <property type="term" value="C:nucleus"/>
    <property type="evidence" value="ECO:0000314"/>
    <property type="project" value="UniProtKB"/>
</dbReference>
<dbReference type="GO" id="GO:0031491">
    <property type="term" value="F:nucleosome binding"/>
    <property type="evidence" value="ECO:0000318"/>
    <property type="project" value="GO_Central"/>
</dbReference>
<dbReference type="GO" id="GO:0006281">
    <property type="term" value="P:DNA repair"/>
    <property type="evidence" value="ECO:0007669"/>
    <property type="project" value="UniProtKB-KW"/>
</dbReference>
<dbReference type="GO" id="GO:0006260">
    <property type="term" value="P:DNA replication"/>
    <property type="evidence" value="ECO:0007669"/>
    <property type="project" value="UniProtKB-KW"/>
</dbReference>
<dbReference type="GO" id="GO:0160094">
    <property type="term" value="P:nematode pharynx development"/>
    <property type="evidence" value="ECO:0000315"/>
    <property type="project" value="UniProtKB"/>
</dbReference>
<dbReference type="GO" id="GO:0006334">
    <property type="term" value="P:nucleosome assembly"/>
    <property type="evidence" value="ECO:0000303"/>
    <property type="project" value="ComplexPortal"/>
</dbReference>
<dbReference type="GO" id="GO:0006337">
    <property type="term" value="P:nucleosome disassembly"/>
    <property type="evidence" value="ECO:0000303"/>
    <property type="project" value="ComplexPortal"/>
</dbReference>
<dbReference type="GO" id="GO:0045787">
    <property type="term" value="P:positive regulation of cell cycle"/>
    <property type="evidence" value="ECO:0000315"/>
    <property type="project" value="ComplexPortal"/>
</dbReference>
<dbReference type="GO" id="GO:0051984">
    <property type="term" value="P:positive regulation of chromosome segregation"/>
    <property type="evidence" value="ECO:0000315"/>
    <property type="project" value="UniProtKB"/>
</dbReference>
<dbReference type="GO" id="GO:0045995">
    <property type="term" value="P:regulation of embryonic development"/>
    <property type="evidence" value="ECO:0000315"/>
    <property type="project" value="UniProtKB"/>
</dbReference>
<dbReference type="GO" id="GO:0006368">
    <property type="term" value="P:transcription elongation by RNA polymerase II"/>
    <property type="evidence" value="ECO:0000318"/>
    <property type="project" value="GO_Central"/>
</dbReference>
<dbReference type="CDD" id="cd01091">
    <property type="entry name" value="CDC68-like"/>
    <property type="match status" value="1"/>
</dbReference>
<dbReference type="FunFam" id="2.30.29.150:FF:000003">
    <property type="entry name" value="FACT complex subunit SPT16"/>
    <property type="match status" value="1"/>
</dbReference>
<dbReference type="FunFam" id="2.30.29.30:FF:000017">
    <property type="entry name" value="FACT complex subunit SPT16"/>
    <property type="match status" value="1"/>
</dbReference>
<dbReference type="FunFam" id="2.30.29.210:FF:000001">
    <property type="entry name" value="FACT complex subunit spt16"/>
    <property type="match status" value="1"/>
</dbReference>
<dbReference type="FunFam" id="3.90.230.10:FF:000021">
    <property type="entry name" value="Transcription factor-like protein"/>
    <property type="match status" value="1"/>
</dbReference>
<dbReference type="Gene3D" id="2.30.29.150">
    <property type="match status" value="1"/>
</dbReference>
<dbReference type="Gene3D" id="3.90.230.10">
    <property type="entry name" value="Creatinase/methionine aminopeptidase superfamily"/>
    <property type="match status" value="1"/>
</dbReference>
<dbReference type="Gene3D" id="3.40.350.10">
    <property type="entry name" value="Creatinase/prolidase N-terminal domain"/>
    <property type="match status" value="1"/>
</dbReference>
<dbReference type="Gene3D" id="2.30.29.210">
    <property type="entry name" value="FACT complex subunit Spt16p/Cdc68p"/>
    <property type="match status" value="1"/>
</dbReference>
<dbReference type="Gene3D" id="2.30.29.30">
    <property type="entry name" value="Pleckstrin-homology domain (PH domain)/Phosphotyrosine-binding domain (PTB)"/>
    <property type="match status" value="1"/>
</dbReference>
<dbReference type="InterPro" id="IPR029149">
    <property type="entry name" value="Creatin/AminoP/Spt16_N"/>
</dbReference>
<dbReference type="InterPro" id="IPR036005">
    <property type="entry name" value="Creatinase/aminopeptidase-like"/>
</dbReference>
<dbReference type="InterPro" id="IPR029148">
    <property type="entry name" value="FACT-SPT16_Nlobe"/>
</dbReference>
<dbReference type="InterPro" id="IPR056595">
    <property type="entry name" value="Fact-SPT16_PH"/>
</dbReference>
<dbReference type="InterPro" id="IPR048969">
    <property type="entry name" value="FACT_SPT16_C"/>
</dbReference>
<dbReference type="InterPro" id="IPR013953">
    <property type="entry name" value="FACT_SPT16_M"/>
</dbReference>
<dbReference type="InterPro" id="IPR000994">
    <property type="entry name" value="Pept_M24"/>
</dbReference>
<dbReference type="InterPro" id="IPR011993">
    <property type="entry name" value="PH-like_dom_sf"/>
</dbReference>
<dbReference type="InterPro" id="IPR013719">
    <property type="entry name" value="RTT106/SPT16-like_middle_dom"/>
</dbReference>
<dbReference type="InterPro" id="IPR040258">
    <property type="entry name" value="Spt16"/>
</dbReference>
<dbReference type="InterPro" id="IPR033825">
    <property type="entry name" value="Spt16_M24"/>
</dbReference>
<dbReference type="PANTHER" id="PTHR13980">
    <property type="entry name" value="CDC68 RELATED"/>
    <property type="match status" value="1"/>
</dbReference>
<dbReference type="PANTHER" id="PTHR13980:SF15">
    <property type="entry name" value="FACT COMPLEX SUBUNIT SPT16"/>
    <property type="match status" value="1"/>
</dbReference>
<dbReference type="Pfam" id="PF14826">
    <property type="entry name" value="FACT-Spt16_Nlob"/>
    <property type="match status" value="1"/>
</dbReference>
<dbReference type="Pfam" id="PF00557">
    <property type="entry name" value="Peptidase_M24"/>
    <property type="match status" value="1"/>
</dbReference>
<dbReference type="Pfam" id="PF24824">
    <property type="entry name" value="PH_SPT16"/>
    <property type="match status" value="1"/>
</dbReference>
<dbReference type="Pfam" id="PF08512">
    <property type="entry name" value="Rttp106-like_middle"/>
    <property type="match status" value="1"/>
</dbReference>
<dbReference type="Pfam" id="PF08644">
    <property type="entry name" value="SPT16"/>
    <property type="match status" value="1"/>
</dbReference>
<dbReference type="Pfam" id="PF21091">
    <property type="entry name" value="SPT16_C"/>
    <property type="match status" value="1"/>
</dbReference>
<dbReference type="SMART" id="SM01285">
    <property type="entry name" value="FACT-Spt16_Nlob"/>
    <property type="match status" value="1"/>
</dbReference>
<dbReference type="SMART" id="SM01287">
    <property type="entry name" value="Rtt106"/>
    <property type="match status" value="1"/>
</dbReference>
<dbReference type="SMART" id="SM01286">
    <property type="entry name" value="SPT16"/>
    <property type="match status" value="1"/>
</dbReference>
<dbReference type="SUPFAM" id="SSF55920">
    <property type="entry name" value="Creatinase/aminopeptidase"/>
    <property type="match status" value="1"/>
</dbReference>
<proteinExistence type="evidence at protein level"/>
<protein>
    <recommendedName>
        <fullName>FACT complex subunit spt-16</fullName>
    </recommendedName>
    <alternativeName>
        <fullName>Facilitates chromatin transcription complex subunit spt-16</fullName>
    </alternativeName>
</protein>
<evidence type="ECO:0000250" key="1">
    <source>
        <dbReference type="UniProtKB" id="Q9Y5B9"/>
    </source>
</evidence>
<evidence type="ECO:0000255" key="2"/>
<evidence type="ECO:0000256" key="3">
    <source>
        <dbReference type="SAM" id="MobiDB-lite"/>
    </source>
</evidence>
<evidence type="ECO:0000269" key="4">
    <source>
    </source>
</evidence>
<evidence type="ECO:0000269" key="5">
    <source>
    </source>
</evidence>
<evidence type="ECO:0000303" key="6">
    <source>
    </source>
</evidence>
<evidence type="ECO:0000305" key="7"/>
<evidence type="ECO:0000305" key="8">
    <source>
    </source>
</evidence>
<evidence type="ECO:0000312" key="9">
    <source>
        <dbReference type="WormBase" id="F55A3.3"/>
    </source>
</evidence>
<accession>Q9N5R9</accession>
<sequence length="1030" mass="116865">MSGKRAVLNKDLFFQRAERLYEHWEKGADGLDSIKSLAFVYGETDNPYTKTSALFTWLFGHEIADTVLLLLKDHIYILGSNRKVEFFGSVTGDNQSSGKVPTVSTLLRDKTDKDAGNFEKLIDHIKSAGGDVGNFVKEKFSSEFVSSWNKALEEGGVNKNDVTLAFTHLFAVKDDKEMDLIRKSAQATTASWTAARARYVEIIDQEKRVRHSVLSNEFAAFMKDSKVQQALAKYEADTCYDPIVMSGGNYSFKWNHESSESHLHSQFGTIITSFGARLSEYCTNLTRTMLIFPSSELETAYEAILAAELAVIAALKPGAKLSDVYKIGIDTLTEKSPKLAETLNKKELGFATGIEFRESRLAISAKCDEVVKAGMVFIVYIGVDSIPNKNKGEKGKPAAIAISDTILVKEEGDNEILTEKAKSRLKSNVIKFKEEQENREAEKDNDQKKMLGRGQRSVVLTDQTRNKTTNEELRKERQKELGVQLNELAKARLSKQGGGTDEKKSKKSNVSYKTEERFPQDADVQKMLIFVDRKYDSVVVPIFGIPVPFHISMIKNCSQSVEGDFTYLRINFATPGSQVGKDSGQFPHPLAHYMKELTFRASNIKDHHSDSTAPSHNLSTAFRLIKEMQKRFKTEEAEEREKEGAVKQDKLILSQNKLNPKLKDLLIRPNIIQKRITGSLEAHTNGFRYTSLRGDRIDVLYNNIKHAFFQPCDNEMIILLHFHLKNPVLWGKKKYKDVQFYTEVGEITTDLGKYHHMQDRDDMQSEQQEREMRRRLNAAFNSFCEKVSRLTNDQFEFDSPFAGLGFFGVPYRSATTLKPTASCLVNLTEWPTFIVTLSEVELVHFERVSLQLKNFDMVFIFKDYKIKPQMVAQIPMSSIDKIKEWLHTCDIWYSEGIQSLNWAKVMKTITDDLEAFFEEGGWSFLNVESDNEEAMDDSDDSDAYDPEEEDASAGSGSESDEDESEGEETESDDDDEGSLDSDESEGKDWSDLEEEAANADKRREVEEPSRDRDRKRPHSSKSGPSHKRRK</sequence>
<keyword id="KW-0158">Chromosome</keyword>
<keyword id="KW-0175">Coiled coil</keyword>
<keyword id="KW-0227">DNA damage</keyword>
<keyword id="KW-0234">DNA repair</keyword>
<keyword id="KW-0235">DNA replication</keyword>
<keyword id="KW-0539">Nucleus</keyword>
<keyword id="KW-1185">Reference proteome</keyword>
<keyword id="KW-0804">Transcription</keyword>
<keyword id="KW-0805">Transcription regulation</keyword>
<name>SPT16_CAEEL</name>
<organism>
    <name type="scientific">Caenorhabditis elegans</name>
    <dbReference type="NCBI Taxonomy" id="6239"/>
    <lineage>
        <taxon>Eukaryota</taxon>
        <taxon>Metazoa</taxon>
        <taxon>Ecdysozoa</taxon>
        <taxon>Nematoda</taxon>
        <taxon>Chromadorea</taxon>
        <taxon>Rhabditida</taxon>
        <taxon>Rhabditina</taxon>
        <taxon>Rhabditomorpha</taxon>
        <taxon>Rhabditoidea</taxon>
        <taxon>Rhabditidae</taxon>
        <taxon>Peloderinae</taxon>
        <taxon>Caenorhabditis</taxon>
    </lineage>
</organism>